<organism>
    <name type="scientific">Buchnera aphidicola subsp. Baizongia pistaciae (strain Bp)</name>
    <dbReference type="NCBI Taxonomy" id="224915"/>
    <lineage>
        <taxon>Bacteria</taxon>
        <taxon>Pseudomonadati</taxon>
        <taxon>Pseudomonadota</taxon>
        <taxon>Gammaproteobacteria</taxon>
        <taxon>Enterobacterales</taxon>
        <taxon>Erwiniaceae</taxon>
        <taxon>Buchnera</taxon>
    </lineage>
</organism>
<evidence type="ECO:0000255" key="1">
    <source>
        <dbReference type="HAMAP-Rule" id="MF_00210"/>
    </source>
</evidence>
<gene>
    <name evidence="1" type="primary">aroA</name>
    <name type="ordered locus">bbp_288</name>
</gene>
<comment type="function">
    <text evidence="1">Catalyzes the transfer of the enolpyruvyl moiety of phosphoenolpyruvate (PEP) to the 5-hydroxyl of shikimate-3-phosphate (S3P) to produce enolpyruvyl shikimate-3-phosphate and inorganic phosphate.</text>
</comment>
<comment type="catalytic activity">
    <reaction evidence="1">
        <text>3-phosphoshikimate + phosphoenolpyruvate = 5-O-(1-carboxyvinyl)-3-phosphoshikimate + phosphate</text>
        <dbReference type="Rhea" id="RHEA:21256"/>
        <dbReference type="ChEBI" id="CHEBI:43474"/>
        <dbReference type="ChEBI" id="CHEBI:57701"/>
        <dbReference type="ChEBI" id="CHEBI:58702"/>
        <dbReference type="ChEBI" id="CHEBI:145989"/>
        <dbReference type="EC" id="2.5.1.19"/>
    </reaction>
    <physiologicalReaction direction="left-to-right" evidence="1">
        <dbReference type="Rhea" id="RHEA:21257"/>
    </physiologicalReaction>
</comment>
<comment type="pathway">
    <text evidence="1">Metabolic intermediate biosynthesis; chorismate biosynthesis; chorismate from D-erythrose 4-phosphate and phosphoenolpyruvate: step 6/7.</text>
</comment>
<comment type="subunit">
    <text evidence="1">Monomer.</text>
</comment>
<comment type="subcellular location">
    <subcellularLocation>
        <location evidence="1">Cytoplasm</location>
    </subcellularLocation>
</comment>
<comment type="similarity">
    <text evidence="1">Belongs to the EPSP synthase family.</text>
</comment>
<sequence>MHECLTLNPISLVNGTINLPGSKSITNRALLLSAMSNSTTHLKNILYSQDTQYMLNTLKICGIKFNCSYTNLSCTIEGCNKPLNISHKTSLFLGNAGTAFRSLAAIFSLNNNNILLTGNKRMKQRPIKHLVQALQQGGAQITYSEQDQYPPIKIKGGFIGGNIFVSGKISSQFLSALLIATPLAQLDSTITVTEKLVSKPYIDITLNLISKFGIKIIHKDYTKFNVQGRQKYISPKEYSIEGDASSASYFLAAAAIKGGSVKVTGIGLNSIQGDVKFANVLKKMGAYITFGKDFIVCKKKDLIGIDLDMNDIPDAAMTIAIVALFSKGKTVIRNIYNWRVKETDRLSAMTNELKKIGAQVIEGNDYIEILPPINFVYAKINTYDDHRIAMCFALIALSGIKVTLLNYKCVNKTFPDYFQKLKSICSY</sequence>
<name>AROA_BUCBP</name>
<protein>
    <recommendedName>
        <fullName evidence="1">3-phosphoshikimate 1-carboxyvinyltransferase</fullName>
        <ecNumber evidence="1">2.5.1.19</ecNumber>
    </recommendedName>
    <alternativeName>
        <fullName evidence="1">5-enolpyruvylshikimate-3-phosphate synthase</fullName>
        <shortName evidence="1">EPSP synthase</shortName>
        <shortName evidence="1">EPSPS</shortName>
    </alternativeName>
</protein>
<feature type="chain" id="PRO_0000088237" description="3-phosphoshikimate 1-carboxyvinyltransferase">
    <location>
        <begin position="1"/>
        <end position="427"/>
    </location>
</feature>
<feature type="active site" description="Proton acceptor" evidence="1">
    <location>
        <position position="314"/>
    </location>
</feature>
<feature type="binding site" evidence="1">
    <location>
        <position position="23"/>
    </location>
    <ligand>
        <name>3-phosphoshikimate</name>
        <dbReference type="ChEBI" id="CHEBI:145989"/>
    </ligand>
</feature>
<feature type="binding site" evidence="1">
    <location>
        <position position="23"/>
    </location>
    <ligand>
        <name>phosphoenolpyruvate</name>
        <dbReference type="ChEBI" id="CHEBI:58702"/>
    </ligand>
</feature>
<feature type="binding site" evidence="1">
    <location>
        <position position="24"/>
    </location>
    <ligand>
        <name>3-phosphoshikimate</name>
        <dbReference type="ChEBI" id="CHEBI:145989"/>
    </ligand>
</feature>
<feature type="binding site" evidence="1">
    <location>
        <position position="28"/>
    </location>
    <ligand>
        <name>3-phosphoshikimate</name>
        <dbReference type="ChEBI" id="CHEBI:145989"/>
    </ligand>
</feature>
<feature type="binding site" evidence="1">
    <location>
        <position position="97"/>
    </location>
    <ligand>
        <name>phosphoenolpyruvate</name>
        <dbReference type="ChEBI" id="CHEBI:58702"/>
    </ligand>
</feature>
<feature type="binding site" evidence="1">
    <location>
        <position position="125"/>
    </location>
    <ligand>
        <name>phosphoenolpyruvate</name>
        <dbReference type="ChEBI" id="CHEBI:58702"/>
    </ligand>
</feature>
<feature type="binding site" evidence="1">
    <location>
        <position position="170"/>
    </location>
    <ligand>
        <name>3-phosphoshikimate</name>
        <dbReference type="ChEBI" id="CHEBI:145989"/>
    </ligand>
</feature>
<feature type="binding site" evidence="1">
    <location>
        <position position="171"/>
    </location>
    <ligand>
        <name>3-phosphoshikimate</name>
        <dbReference type="ChEBI" id="CHEBI:145989"/>
    </ligand>
</feature>
<feature type="binding site" evidence="1">
    <location>
        <position position="172"/>
    </location>
    <ligand>
        <name>3-phosphoshikimate</name>
        <dbReference type="ChEBI" id="CHEBI:145989"/>
    </ligand>
</feature>
<feature type="binding site" evidence="1">
    <location>
        <position position="172"/>
    </location>
    <ligand>
        <name>phosphoenolpyruvate</name>
        <dbReference type="ChEBI" id="CHEBI:58702"/>
    </ligand>
</feature>
<feature type="binding site" evidence="1">
    <location>
        <position position="198"/>
    </location>
    <ligand>
        <name>3-phosphoshikimate</name>
        <dbReference type="ChEBI" id="CHEBI:145989"/>
    </ligand>
</feature>
<feature type="binding site" evidence="1">
    <location>
        <position position="314"/>
    </location>
    <ligand>
        <name>3-phosphoshikimate</name>
        <dbReference type="ChEBI" id="CHEBI:145989"/>
    </ligand>
</feature>
<feature type="binding site" evidence="1">
    <location>
        <position position="337"/>
    </location>
    <ligand>
        <name>3-phosphoshikimate</name>
        <dbReference type="ChEBI" id="CHEBI:145989"/>
    </ligand>
</feature>
<feature type="binding site" evidence="1">
    <location>
        <position position="341"/>
    </location>
    <ligand>
        <name>3-phosphoshikimate</name>
        <dbReference type="ChEBI" id="CHEBI:145989"/>
    </ligand>
</feature>
<feature type="binding site" evidence="1">
    <location>
        <position position="345"/>
    </location>
    <ligand>
        <name>phosphoenolpyruvate</name>
        <dbReference type="ChEBI" id="CHEBI:58702"/>
    </ligand>
</feature>
<feature type="binding site" evidence="1">
    <location>
        <position position="387"/>
    </location>
    <ligand>
        <name>phosphoenolpyruvate</name>
        <dbReference type="ChEBI" id="CHEBI:58702"/>
    </ligand>
</feature>
<feature type="binding site" evidence="1">
    <location>
        <position position="412"/>
    </location>
    <ligand>
        <name>phosphoenolpyruvate</name>
        <dbReference type="ChEBI" id="CHEBI:58702"/>
    </ligand>
</feature>
<reference key="1">
    <citation type="journal article" date="2003" name="Proc. Natl. Acad. Sci. U.S.A.">
        <title>Reductive genome evolution in Buchnera aphidicola.</title>
        <authorList>
            <person name="van Ham R.C.H.J."/>
            <person name="Kamerbeek J."/>
            <person name="Palacios C."/>
            <person name="Rausell C."/>
            <person name="Abascal F."/>
            <person name="Bastolla U."/>
            <person name="Fernandez J.M."/>
            <person name="Jimenez L."/>
            <person name="Postigo M."/>
            <person name="Silva F.J."/>
            <person name="Tamames J."/>
            <person name="Viguera E."/>
            <person name="Latorre A."/>
            <person name="Valencia A."/>
            <person name="Moran F."/>
            <person name="Moya A."/>
        </authorList>
    </citation>
    <scope>NUCLEOTIDE SEQUENCE [LARGE SCALE GENOMIC DNA]</scope>
    <source>
        <strain>Bp</strain>
    </source>
</reference>
<accession>P59416</accession>
<dbReference type="EC" id="2.5.1.19" evidence="1"/>
<dbReference type="EMBL" id="AE016826">
    <property type="protein sequence ID" value="AAO27013.1"/>
    <property type="molecule type" value="Genomic_DNA"/>
</dbReference>
<dbReference type="RefSeq" id="WP_011091414.1">
    <property type="nucleotide sequence ID" value="NC_004545.1"/>
</dbReference>
<dbReference type="SMR" id="P59416"/>
<dbReference type="STRING" id="224915.bbp_288"/>
<dbReference type="KEGG" id="bab:bbp_288"/>
<dbReference type="eggNOG" id="COG0128">
    <property type="taxonomic scope" value="Bacteria"/>
</dbReference>
<dbReference type="HOGENOM" id="CLU_024321_0_0_6"/>
<dbReference type="OrthoDB" id="9809920at2"/>
<dbReference type="UniPathway" id="UPA00053">
    <property type="reaction ID" value="UER00089"/>
</dbReference>
<dbReference type="Proteomes" id="UP000000601">
    <property type="component" value="Chromosome"/>
</dbReference>
<dbReference type="GO" id="GO:0005737">
    <property type="term" value="C:cytoplasm"/>
    <property type="evidence" value="ECO:0007669"/>
    <property type="project" value="UniProtKB-SubCell"/>
</dbReference>
<dbReference type="GO" id="GO:0003866">
    <property type="term" value="F:3-phosphoshikimate 1-carboxyvinyltransferase activity"/>
    <property type="evidence" value="ECO:0007669"/>
    <property type="project" value="UniProtKB-UniRule"/>
</dbReference>
<dbReference type="GO" id="GO:0008652">
    <property type="term" value="P:amino acid biosynthetic process"/>
    <property type="evidence" value="ECO:0007669"/>
    <property type="project" value="UniProtKB-KW"/>
</dbReference>
<dbReference type="GO" id="GO:0009073">
    <property type="term" value="P:aromatic amino acid family biosynthetic process"/>
    <property type="evidence" value="ECO:0007669"/>
    <property type="project" value="UniProtKB-KW"/>
</dbReference>
<dbReference type="GO" id="GO:0009423">
    <property type="term" value="P:chorismate biosynthetic process"/>
    <property type="evidence" value="ECO:0007669"/>
    <property type="project" value="UniProtKB-UniRule"/>
</dbReference>
<dbReference type="CDD" id="cd01556">
    <property type="entry name" value="EPSP_synthase"/>
    <property type="match status" value="1"/>
</dbReference>
<dbReference type="FunFam" id="3.65.10.10:FF:000003">
    <property type="entry name" value="3-phosphoshikimate 1-carboxyvinyltransferase"/>
    <property type="match status" value="1"/>
</dbReference>
<dbReference type="FunFam" id="3.65.10.10:FF:000004">
    <property type="entry name" value="3-phosphoshikimate 1-carboxyvinyltransferase"/>
    <property type="match status" value="1"/>
</dbReference>
<dbReference type="Gene3D" id="3.65.10.10">
    <property type="entry name" value="Enolpyruvate transferase domain"/>
    <property type="match status" value="2"/>
</dbReference>
<dbReference type="HAMAP" id="MF_00210">
    <property type="entry name" value="EPSP_synth"/>
    <property type="match status" value="1"/>
</dbReference>
<dbReference type="InterPro" id="IPR001986">
    <property type="entry name" value="Enolpyruvate_Tfrase_dom"/>
</dbReference>
<dbReference type="InterPro" id="IPR036968">
    <property type="entry name" value="Enolpyruvate_Tfrase_sf"/>
</dbReference>
<dbReference type="InterPro" id="IPR006264">
    <property type="entry name" value="EPSP_synthase"/>
</dbReference>
<dbReference type="InterPro" id="IPR023193">
    <property type="entry name" value="EPSP_synthase_CS"/>
</dbReference>
<dbReference type="InterPro" id="IPR013792">
    <property type="entry name" value="RNA3'P_cycl/enolpyr_Trfase_a/b"/>
</dbReference>
<dbReference type="NCBIfam" id="TIGR01356">
    <property type="entry name" value="aroA"/>
    <property type="match status" value="1"/>
</dbReference>
<dbReference type="PANTHER" id="PTHR21090">
    <property type="entry name" value="AROM/DEHYDROQUINATE SYNTHASE"/>
    <property type="match status" value="1"/>
</dbReference>
<dbReference type="PANTHER" id="PTHR21090:SF5">
    <property type="entry name" value="PENTAFUNCTIONAL AROM POLYPEPTIDE"/>
    <property type="match status" value="1"/>
</dbReference>
<dbReference type="Pfam" id="PF00275">
    <property type="entry name" value="EPSP_synthase"/>
    <property type="match status" value="1"/>
</dbReference>
<dbReference type="PIRSF" id="PIRSF000505">
    <property type="entry name" value="EPSPS"/>
    <property type="match status" value="1"/>
</dbReference>
<dbReference type="SUPFAM" id="SSF55205">
    <property type="entry name" value="EPT/RTPC-like"/>
    <property type="match status" value="1"/>
</dbReference>
<dbReference type="PROSITE" id="PS00104">
    <property type="entry name" value="EPSP_SYNTHASE_1"/>
    <property type="match status" value="1"/>
</dbReference>
<dbReference type="PROSITE" id="PS00885">
    <property type="entry name" value="EPSP_SYNTHASE_2"/>
    <property type="match status" value="1"/>
</dbReference>
<proteinExistence type="inferred from homology"/>
<keyword id="KW-0028">Amino-acid biosynthesis</keyword>
<keyword id="KW-0057">Aromatic amino acid biosynthesis</keyword>
<keyword id="KW-0963">Cytoplasm</keyword>
<keyword id="KW-1185">Reference proteome</keyword>
<keyword id="KW-0808">Transferase</keyword>